<gene>
    <name type="primary">rpmG2</name>
    <name type="ordered locus">MW1222</name>
</gene>
<name>RL332_STAAW</name>
<sequence length="49" mass="5932">MRVNVTLACTECGDRNYITTKNKRNNPERIEMKKYCPRLNKYTLHRETK</sequence>
<comment type="similarity">
    <text evidence="2">Belongs to the bacterial ribosomal protein bL33 family.</text>
</comment>
<reference key="1">
    <citation type="journal article" date="2002" name="Lancet">
        <title>Genome and virulence determinants of high virulence community-acquired MRSA.</title>
        <authorList>
            <person name="Baba T."/>
            <person name="Takeuchi F."/>
            <person name="Kuroda M."/>
            <person name="Yuzawa H."/>
            <person name="Aoki K."/>
            <person name="Oguchi A."/>
            <person name="Nagai Y."/>
            <person name="Iwama N."/>
            <person name="Asano K."/>
            <person name="Naimi T."/>
            <person name="Kuroda H."/>
            <person name="Cui L."/>
            <person name="Yamamoto K."/>
            <person name="Hiramatsu K."/>
        </authorList>
    </citation>
    <scope>NUCLEOTIDE SEQUENCE [LARGE SCALE GENOMIC DNA]</scope>
    <source>
        <strain>MW2</strain>
    </source>
</reference>
<organism>
    <name type="scientific">Staphylococcus aureus (strain MW2)</name>
    <dbReference type="NCBI Taxonomy" id="196620"/>
    <lineage>
        <taxon>Bacteria</taxon>
        <taxon>Bacillati</taxon>
        <taxon>Bacillota</taxon>
        <taxon>Bacilli</taxon>
        <taxon>Bacillales</taxon>
        <taxon>Staphylococcaceae</taxon>
        <taxon>Staphylococcus</taxon>
    </lineage>
</organism>
<accession>P66232</accession>
<accession>Q99UE1</accession>
<feature type="chain" id="PRO_0000170227" description="Large ribosomal subunit protein bL33B">
    <location>
        <begin position="1"/>
        <end position="49"/>
    </location>
</feature>
<proteinExistence type="evidence at protein level"/>
<keyword id="KW-0002">3D-structure</keyword>
<keyword id="KW-0687">Ribonucleoprotein</keyword>
<keyword id="KW-0689">Ribosomal protein</keyword>
<dbReference type="EMBL" id="BA000033">
    <property type="protein sequence ID" value="BAB95087.1"/>
    <property type="molecule type" value="Genomic_DNA"/>
</dbReference>
<dbReference type="PDB" id="8Y36">
    <property type="method" value="EM"/>
    <property type="resolution" value="2.65 A"/>
    <property type="chains" value="1=2-48"/>
</dbReference>
<dbReference type="PDB" id="8Y37">
    <property type="method" value="EM"/>
    <property type="resolution" value="2.53 A"/>
    <property type="chains" value="1=2-48"/>
</dbReference>
<dbReference type="PDB" id="8Y38">
    <property type="method" value="EM"/>
    <property type="resolution" value="2.58 A"/>
    <property type="chains" value="1=2-48"/>
</dbReference>
<dbReference type="PDB" id="8Y39">
    <property type="method" value="EM"/>
    <property type="resolution" value="3.60 A"/>
    <property type="chains" value="1=2-48"/>
</dbReference>
<dbReference type="PDBsum" id="8Y36"/>
<dbReference type="PDBsum" id="8Y37"/>
<dbReference type="PDBsum" id="8Y38"/>
<dbReference type="PDBsum" id="8Y39"/>
<dbReference type="EMDB" id="EMD-38873"/>
<dbReference type="EMDB" id="EMD-38874"/>
<dbReference type="EMDB" id="EMD-38875"/>
<dbReference type="EMDB" id="EMD-38876"/>
<dbReference type="SMR" id="P66232"/>
<dbReference type="KEGG" id="sam:MW1222"/>
<dbReference type="HOGENOM" id="CLU_190949_0_2_9"/>
<dbReference type="GO" id="GO:0005737">
    <property type="term" value="C:cytoplasm"/>
    <property type="evidence" value="ECO:0007669"/>
    <property type="project" value="UniProtKB-ARBA"/>
</dbReference>
<dbReference type="GO" id="GO:1990904">
    <property type="term" value="C:ribonucleoprotein complex"/>
    <property type="evidence" value="ECO:0007669"/>
    <property type="project" value="UniProtKB-KW"/>
</dbReference>
<dbReference type="GO" id="GO:0005840">
    <property type="term" value="C:ribosome"/>
    <property type="evidence" value="ECO:0007669"/>
    <property type="project" value="UniProtKB-KW"/>
</dbReference>
<dbReference type="GO" id="GO:0003735">
    <property type="term" value="F:structural constituent of ribosome"/>
    <property type="evidence" value="ECO:0007669"/>
    <property type="project" value="InterPro"/>
</dbReference>
<dbReference type="GO" id="GO:0006412">
    <property type="term" value="P:translation"/>
    <property type="evidence" value="ECO:0007669"/>
    <property type="project" value="UniProtKB-UniRule"/>
</dbReference>
<dbReference type="Gene3D" id="2.20.28.120">
    <property type="entry name" value="Ribosomal protein L33"/>
    <property type="match status" value="1"/>
</dbReference>
<dbReference type="HAMAP" id="MF_00294">
    <property type="entry name" value="Ribosomal_bL33"/>
    <property type="match status" value="1"/>
</dbReference>
<dbReference type="InterPro" id="IPR001705">
    <property type="entry name" value="Ribosomal_bL33"/>
</dbReference>
<dbReference type="InterPro" id="IPR018264">
    <property type="entry name" value="Ribosomal_bL33_CS"/>
</dbReference>
<dbReference type="InterPro" id="IPR038584">
    <property type="entry name" value="Ribosomal_bL33_sf"/>
</dbReference>
<dbReference type="InterPro" id="IPR011332">
    <property type="entry name" value="Ribosomal_zn-bd"/>
</dbReference>
<dbReference type="NCBIfam" id="NF001764">
    <property type="entry name" value="PRK00504.1"/>
    <property type="match status" value="1"/>
</dbReference>
<dbReference type="NCBIfam" id="NF001860">
    <property type="entry name" value="PRK00595.1"/>
    <property type="match status" value="1"/>
</dbReference>
<dbReference type="NCBIfam" id="TIGR01023">
    <property type="entry name" value="rpmG_bact"/>
    <property type="match status" value="1"/>
</dbReference>
<dbReference type="PANTHER" id="PTHR43168">
    <property type="entry name" value="50S RIBOSOMAL PROTEIN L33, CHLOROPLASTIC"/>
    <property type="match status" value="1"/>
</dbReference>
<dbReference type="PANTHER" id="PTHR43168:SF2">
    <property type="entry name" value="LARGE RIBOSOMAL SUBUNIT PROTEIN BL33C"/>
    <property type="match status" value="1"/>
</dbReference>
<dbReference type="Pfam" id="PF00471">
    <property type="entry name" value="Ribosomal_L33"/>
    <property type="match status" value="1"/>
</dbReference>
<dbReference type="SUPFAM" id="SSF57829">
    <property type="entry name" value="Zn-binding ribosomal proteins"/>
    <property type="match status" value="1"/>
</dbReference>
<dbReference type="PROSITE" id="PS00582">
    <property type="entry name" value="RIBOSOMAL_L33"/>
    <property type="match status" value="1"/>
</dbReference>
<evidence type="ECO:0000255" key="1">
    <source>
        <dbReference type="HAMAP-Rule" id="MF_00294"/>
    </source>
</evidence>
<evidence type="ECO:0000305" key="2"/>
<protein>
    <recommendedName>
        <fullName evidence="1">Large ribosomal subunit protein bL33B</fullName>
    </recommendedName>
    <alternativeName>
        <fullName>50S ribosomal protein L33 2</fullName>
    </alternativeName>
</protein>